<protein>
    <recommendedName>
        <fullName>Elongation factor 2</fullName>
        <shortName>EF-2</shortName>
    </recommendedName>
</protein>
<organism>
    <name type="scientific">Pyrococcus horikoshii (strain ATCC 700860 / DSM 12428 / JCM 9974 / NBRC 100139 / OT-3)</name>
    <dbReference type="NCBI Taxonomy" id="70601"/>
    <lineage>
        <taxon>Archaea</taxon>
        <taxon>Methanobacteriati</taxon>
        <taxon>Methanobacteriota</taxon>
        <taxon>Thermococci</taxon>
        <taxon>Thermococcales</taxon>
        <taxon>Thermococcaceae</taxon>
        <taxon>Pyrococcus</taxon>
    </lineage>
</organism>
<sequence length="732" mass="82399">MGRREEMIAKIKELMLQPERIRNIGIAAHIDHGKTTLSDNLLAGAGMISEELAGKQLVLDFDEQEQARGITINAANVSMVHNYEGKDYLINLIDTPGHVDFGGDVTRAMRAIDGVIIVVDAVEGVMPQTETVVRQALREYVKPVLFINKVDRLIRELKLTPQQMMERFSKIIMDVNRLIQRYAPEEYKKKWMVKVEDGSVAFGSAYYNWALSVPFMKRTGVKFNEIIDLTLKGDNRTLRQKAPLHVVVLDMVVRHLPSPIEAQKYRIPHLWEGDISSDIGQAMLNCDPKGKMVMVVTKIIIDKHAGEVATGRVWSGTVKSGQEVYLINTKRKARIQQVGIYMGPERINMEAVPAGNIVAVTGLRDAMAGETVAEEQIEPFEALHYVSEPVVTVAIEAKNVKDLPRLIEALRQLAKEDPTLHVKIDEETGQHLLSGMGELHLEVKLYKLKKDWGIDIEVSEPIVVYRESITKSSPMVEGKSPNRHNRFYIVVEPMPDEIYNAIKEGIIPEGRVKNPKEVAKKLAELGMDYEIARGIVDIYNGNMFIDNTKGVQYLNEVMDLLIDGFHQAMDEGPLAREPVMKVIVRLLDAQVHEDNVHRGPAQIYPAIRTAIHCAMMKSNPVLYEPYQKVIINIPYEYMGAVSREITQRRGQLVDMKQEGEVMTIIAEAPVAEMFGFAGSIRSATSGRALWSTEHAGFKRVPNELAQQIIRQIRQRKGLDPNPPTEKDVCPLF</sequence>
<keyword id="KW-0002">3D-structure</keyword>
<keyword id="KW-0963">Cytoplasm</keyword>
<keyword id="KW-0251">Elongation factor</keyword>
<keyword id="KW-0342">GTP-binding</keyword>
<keyword id="KW-0547">Nucleotide-binding</keyword>
<keyword id="KW-0648">Protein biosynthesis</keyword>
<reference key="1">
    <citation type="journal article" date="1998" name="DNA Res.">
        <title>Complete sequence and gene organization of the genome of a hyper-thermophilic archaebacterium, Pyrococcus horikoshii OT3.</title>
        <authorList>
            <person name="Kawarabayasi Y."/>
            <person name="Sawada M."/>
            <person name="Horikawa H."/>
            <person name="Haikawa Y."/>
            <person name="Hino Y."/>
            <person name="Yamamoto S."/>
            <person name="Sekine M."/>
            <person name="Baba S."/>
            <person name="Kosugi H."/>
            <person name="Hosoyama A."/>
            <person name="Nagai Y."/>
            <person name="Sakai M."/>
            <person name="Ogura K."/>
            <person name="Otsuka R."/>
            <person name="Nakazawa H."/>
            <person name="Takamiya M."/>
            <person name="Ohfuku Y."/>
            <person name="Funahashi T."/>
            <person name="Tanaka T."/>
            <person name="Kudoh Y."/>
            <person name="Yamazaki J."/>
            <person name="Kushida N."/>
            <person name="Oguchi A."/>
            <person name="Aoki K."/>
            <person name="Yoshizawa T."/>
            <person name="Nakamura Y."/>
            <person name="Robb F.T."/>
            <person name="Horikoshi K."/>
            <person name="Masuchi Y."/>
            <person name="Shizuya H."/>
            <person name="Kikuchi H."/>
        </authorList>
    </citation>
    <scope>NUCLEOTIDE SEQUENCE [LARGE SCALE GENOMIC DNA]</scope>
    <source>
        <strain>ATCC 700860 / DSM 12428 / JCM 9974 / NBRC 100139 / OT-3</strain>
    </source>
</reference>
<reference key="2">
    <citation type="journal article" date="2010" name="Nature">
        <title>Diphthamide biosynthesis requires an organic radical generated by an iron-sulphur enzyme.</title>
        <authorList>
            <person name="Zhang Y."/>
            <person name="Zhu X."/>
            <person name="Torelli A.T."/>
            <person name="Lee M."/>
            <person name="Dzikovski B."/>
            <person name="Koralewski R.M."/>
            <person name="Wang E."/>
            <person name="Freed J."/>
            <person name="Krebs C."/>
            <person name="Ealick S.E."/>
            <person name="Lin H."/>
        </authorList>
    </citation>
    <scope>MUTAGENESIS OF HIS-597</scope>
    <scope>DIPHTHAMIDE AT HIS-597</scope>
</reference>
<feature type="chain" id="PRO_0000091044" description="Elongation factor 2">
    <location>
        <begin position="1"/>
        <end position="732"/>
    </location>
</feature>
<feature type="domain" description="tr-type G">
    <location>
        <begin position="19"/>
        <end position="260"/>
    </location>
</feature>
<feature type="binding site" evidence="1">
    <location>
        <begin position="28"/>
        <end position="35"/>
    </location>
    <ligand>
        <name>GTP</name>
        <dbReference type="ChEBI" id="CHEBI:37565"/>
    </ligand>
</feature>
<feature type="binding site" evidence="1">
    <location>
        <begin position="94"/>
        <end position="98"/>
    </location>
    <ligand>
        <name>GTP</name>
        <dbReference type="ChEBI" id="CHEBI:37565"/>
    </ligand>
</feature>
<feature type="binding site" evidence="1">
    <location>
        <begin position="148"/>
        <end position="151"/>
    </location>
    <ligand>
        <name>GTP</name>
        <dbReference type="ChEBI" id="CHEBI:37565"/>
    </ligand>
</feature>
<feature type="modified residue" description="Diphthamide" evidence="2">
    <location>
        <position position="597"/>
    </location>
</feature>
<feature type="mutagenesis site" description="No histidine modification." evidence="2">
    <original>H</original>
    <variation>A</variation>
    <location>
        <position position="597"/>
    </location>
</feature>
<feature type="helix" evidence="5">
    <location>
        <begin position="4"/>
        <end position="15"/>
    </location>
</feature>
<feature type="helix" evidence="5">
    <location>
        <begin position="18"/>
        <end position="20"/>
    </location>
</feature>
<feature type="strand" evidence="5">
    <location>
        <begin position="21"/>
        <end position="29"/>
    </location>
</feature>
<feature type="strand" evidence="6">
    <location>
        <begin position="30"/>
        <end position="33"/>
    </location>
</feature>
<feature type="helix" evidence="5">
    <location>
        <begin position="34"/>
        <end position="44"/>
    </location>
</feature>
<feature type="turn" evidence="5">
    <location>
        <begin position="45"/>
        <end position="48"/>
    </location>
</feature>
<feature type="turn" evidence="5">
    <location>
        <begin position="68"/>
        <end position="73"/>
    </location>
</feature>
<feature type="strand" evidence="5">
    <location>
        <begin position="75"/>
        <end position="83"/>
    </location>
</feature>
<feature type="strand" evidence="5">
    <location>
        <begin position="86"/>
        <end position="93"/>
    </location>
</feature>
<feature type="helix" evidence="5">
    <location>
        <begin position="103"/>
        <end position="111"/>
    </location>
</feature>
<feature type="strand" evidence="5">
    <location>
        <begin position="113"/>
        <end position="120"/>
    </location>
</feature>
<feature type="turn" evidence="5">
    <location>
        <begin position="121"/>
        <end position="123"/>
    </location>
</feature>
<feature type="helix" evidence="5">
    <location>
        <begin position="127"/>
        <end position="138"/>
    </location>
</feature>
<feature type="strand" evidence="5">
    <location>
        <begin position="142"/>
        <end position="148"/>
    </location>
</feature>
<feature type="helix" evidence="5">
    <location>
        <begin position="150"/>
        <end position="155"/>
    </location>
</feature>
<feature type="helix" evidence="5">
    <location>
        <begin position="161"/>
        <end position="182"/>
    </location>
</feature>
<feature type="helix" evidence="5">
    <location>
        <begin position="185"/>
        <end position="187"/>
    </location>
</feature>
<feature type="turn" evidence="5">
    <location>
        <begin position="188"/>
        <end position="191"/>
    </location>
</feature>
<feature type="turn" evidence="5">
    <location>
        <begin position="195"/>
        <end position="198"/>
    </location>
</feature>
<feature type="strand" evidence="5">
    <location>
        <begin position="199"/>
        <end position="204"/>
    </location>
</feature>
<feature type="turn" evidence="5">
    <location>
        <begin position="205"/>
        <end position="208"/>
    </location>
</feature>
<feature type="strand" evidence="5">
    <location>
        <begin position="209"/>
        <end position="211"/>
    </location>
</feature>
<feature type="helix" evidence="5">
    <location>
        <begin position="213"/>
        <end position="219"/>
    </location>
</feature>
<feature type="helix" evidence="5">
    <location>
        <begin position="223"/>
        <end position="232"/>
    </location>
</feature>
<feature type="helix" evidence="5">
    <location>
        <begin position="235"/>
        <end position="241"/>
    </location>
</feature>
<feature type="helix" evidence="5">
    <location>
        <begin position="244"/>
        <end position="255"/>
    </location>
</feature>
<feature type="helix" evidence="5">
    <location>
        <begin position="259"/>
        <end position="270"/>
    </location>
</feature>
<feature type="strand" evidence="4">
    <location>
        <begin position="275"/>
        <end position="277"/>
    </location>
</feature>
<feature type="helix" evidence="5">
    <location>
        <begin position="278"/>
        <end position="284"/>
    </location>
</feature>
<feature type="strand" evidence="4">
    <location>
        <begin position="288"/>
        <end position="290"/>
    </location>
</feature>
<feature type="strand" evidence="5">
    <location>
        <begin position="293"/>
        <end position="302"/>
    </location>
</feature>
<feature type="turn" evidence="5">
    <location>
        <begin position="303"/>
        <end position="305"/>
    </location>
</feature>
<feature type="strand" evidence="5">
    <location>
        <begin position="306"/>
        <end position="319"/>
    </location>
</feature>
<feature type="strand" evidence="5">
    <location>
        <begin position="323"/>
        <end position="326"/>
    </location>
</feature>
<feature type="turn" evidence="5">
    <location>
        <begin position="327"/>
        <end position="330"/>
    </location>
</feature>
<feature type="strand" evidence="5">
    <location>
        <begin position="331"/>
        <end position="334"/>
    </location>
</feature>
<feature type="strand" evidence="5">
    <location>
        <begin position="338"/>
        <end position="342"/>
    </location>
</feature>
<feature type="strand" evidence="5">
    <location>
        <begin position="345"/>
        <end position="348"/>
    </location>
</feature>
<feature type="strand" evidence="5">
    <location>
        <begin position="350"/>
        <end position="353"/>
    </location>
</feature>
<feature type="strand" evidence="5">
    <location>
        <begin position="357"/>
        <end position="362"/>
    </location>
</feature>
<feature type="strand" evidence="5">
    <location>
        <begin position="371"/>
        <end position="375"/>
    </location>
</feature>
<feature type="strand" evidence="4">
    <location>
        <begin position="391"/>
        <end position="399"/>
    </location>
</feature>
<feature type="helix" evidence="6">
    <location>
        <begin position="400"/>
        <end position="402"/>
    </location>
</feature>
<feature type="helix" evidence="4">
    <location>
        <begin position="403"/>
        <end position="405"/>
    </location>
</feature>
<feature type="helix" evidence="4">
    <location>
        <begin position="406"/>
        <end position="416"/>
    </location>
</feature>
<feature type="turn" evidence="4">
    <location>
        <begin position="426"/>
        <end position="428"/>
    </location>
</feature>
<feature type="strand" evidence="4">
    <location>
        <begin position="432"/>
        <end position="437"/>
    </location>
</feature>
<feature type="helix" evidence="4">
    <location>
        <begin position="438"/>
        <end position="449"/>
    </location>
</feature>
<feature type="strand" evidence="4">
    <location>
        <begin position="456"/>
        <end position="458"/>
    </location>
</feature>
<feature type="strand" evidence="4">
    <location>
        <begin position="466"/>
        <end position="471"/>
    </location>
</feature>
<feature type="strand" evidence="4">
    <location>
        <begin position="476"/>
        <end position="479"/>
    </location>
</feature>
<feature type="strand" evidence="4">
    <location>
        <begin position="486"/>
        <end position="493"/>
    </location>
</feature>
<feature type="helix" evidence="4">
    <location>
        <begin position="496"/>
        <end position="503"/>
    </location>
</feature>
<feature type="strand" evidence="4">
    <location>
        <begin position="505"/>
        <end position="507"/>
    </location>
</feature>
<feature type="strand" evidence="4">
    <location>
        <begin position="509"/>
        <end position="511"/>
    </location>
</feature>
<feature type="helix" evidence="4">
    <location>
        <begin position="515"/>
        <end position="524"/>
    </location>
</feature>
<feature type="helix" evidence="4">
    <location>
        <begin position="529"/>
        <end position="532"/>
    </location>
</feature>
<feature type="strand" evidence="4">
    <location>
        <begin position="535"/>
        <end position="539"/>
    </location>
</feature>
<feature type="strand" evidence="4">
    <location>
        <begin position="542"/>
        <end position="546"/>
    </location>
</feature>
<feature type="helix" evidence="4">
    <location>
        <begin position="554"/>
        <end position="570"/>
    </location>
</feature>
<feature type="turn" evidence="4">
    <location>
        <begin position="573"/>
        <end position="575"/>
    </location>
</feature>
<feature type="strand" evidence="4">
    <location>
        <begin position="581"/>
        <end position="590"/>
    </location>
</feature>
<feature type="helix" evidence="4">
    <location>
        <begin position="595"/>
        <end position="597"/>
    </location>
</feature>
<feature type="helix" evidence="4">
    <location>
        <begin position="600"/>
        <end position="616"/>
    </location>
</feature>
<feature type="strand" evidence="4">
    <location>
        <begin position="620"/>
        <end position="634"/>
    </location>
</feature>
<feature type="helix" evidence="4">
    <location>
        <begin position="635"/>
        <end position="637"/>
    </location>
</feature>
<feature type="helix" evidence="4">
    <location>
        <begin position="638"/>
        <end position="647"/>
    </location>
</feature>
<feature type="strand" evidence="4">
    <location>
        <begin position="651"/>
        <end position="658"/>
    </location>
</feature>
<feature type="strand" evidence="4">
    <location>
        <begin position="661"/>
        <end position="669"/>
    </location>
</feature>
<feature type="helix" evidence="4">
    <location>
        <begin position="670"/>
        <end position="672"/>
    </location>
</feature>
<feature type="helix" evidence="4">
    <location>
        <begin position="676"/>
        <end position="683"/>
    </location>
</feature>
<feature type="turn" evidence="4">
    <location>
        <begin position="684"/>
        <end position="686"/>
    </location>
</feature>
<feature type="strand" evidence="4">
    <location>
        <begin position="689"/>
        <end position="699"/>
    </location>
</feature>
<feature type="helix" evidence="4">
    <location>
        <begin position="702"/>
        <end position="715"/>
    </location>
</feature>
<feature type="helix" evidence="4">
    <location>
        <begin position="725"/>
        <end position="728"/>
    </location>
</feature>
<name>EF2_PYRHO</name>
<dbReference type="EMBL" id="BA000001">
    <property type="protein sequence ID" value="BAA31022.1"/>
    <property type="status" value="ALT_INIT"/>
    <property type="molecule type" value="Genomic_DNA"/>
</dbReference>
<dbReference type="PIR" id="G71203">
    <property type="entry name" value="G71203"/>
</dbReference>
<dbReference type="RefSeq" id="WP_048053510.1">
    <property type="nucleotide sequence ID" value="NC_000961.1"/>
</dbReference>
<dbReference type="PDB" id="5H7J">
    <property type="method" value="X-ray"/>
    <property type="resolution" value="2.30 A"/>
    <property type="chains" value="A/B=1-732"/>
</dbReference>
<dbReference type="PDB" id="5H7K">
    <property type="method" value="X-ray"/>
    <property type="resolution" value="1.60 A"/>
    <property type="chains" value="A=1-386"/>
</dbReference>
<dbReference type="PDB" id="5H7L">
    <property type="method" value="X-ray"/>
    <property type="resolution" value="3.10 A"/>
    <property type="chains" value="A/B=1-732"/>
</dbReference>
<dbReference type="PDBsum" id="5H7J"/>
<dbReference type="PDBsum" id="5H7K"/>
<dbReference type="PDBsum" id="5H7L"/>
<dbReference type="SMR" id="O59521"/>
<dbReference type="STRING" id="70601.gene:9378907"/>
<dbReference type="EnsemblBacteria" id="BAA31022">
    <property type="protein sequence ID" value="BAA31022"/>
    <property type="gene ID" value="BAA31022"/>
</dbReference>
<dbReference type="GeneID" id="1442743"/>
<dbReference type="KEGG" id="pho:PH1899"/>
<dbReference type="eggNOG" id="arCOG01559">
    <property type="taxonomic scope" value="Archaea"/>
</dbReference>
<dbReference type="OrthoDB" id="6290at2157"/>
<dbReference type="Proteomes" id="UP000000752">
    <property type="component" value="Chromosome"/>
</dbReference>
<dbReference type="GO" id="GO:0005829">
    <property type="term" value="C:cytosol"/>
    <property type="evidence" value="ECO:0007669"/>
    <property type="project" value="TreeGrafter"/>
</dbReference>
<dbReference type="GO" id="GO:1990904">
    <property type="term" value="C:ribonucleoprotein complex"/>
    <property type="evidence" value="ECO:0007669"/>
    <property type="project" value="TreeGrafter"/>
</dbReference>
<dbReference type="GO" id="GO:0005525">
    <property type="term" value="F:GTP binding"/>
    <property type="evidence" value="ECO:0007669"/>
    <property type="project" value="UniProtKB-UniRule"/>
</dbReference>
<dbReference type="GO" id="GO:0003924">
    <property type="term" value="F:GTPase activity"/>
    <property type="evidence" value="ECO:0007669"/>
    <property type="project" value="InterPro"/>
</dbReference>
<dbReference type="GO" id="GO:0003746">
    <property type="term" value="F:translation elongation factor activity"/>
    <property type="evidence" value="ECO:0007669"/>
    <property type="project" value="UniProtKB-UniRule"/>
</dbReference>
<dbReference type="CDD" id="cd01681">
    <property type="entry name" value="aeEF2_snRNP_like_IV"/>
    <property type="match status" value="1"/>
</dbReference>
<dbReference type="CDD" id="cd01885">
    <property type="entry name" value="EF2"/>
    <property type="match status" value="1"/>
</dbReference>
<dbReference type="CDD" id="cd16268">
    <property type="entry name" value="EF2_II"/>
    <property type="match status" value="1"/>
</dbReference>
<dbReference type="CDD" id="cd16261">
    <property type="entry name" value="EF2_snRNP_III"/>
    <property type="match status" value="1"/>
</dbReference>
<dbReference type="CDD" id="cd01514">
    <property type="entry name" value="Elongation_Factor_C"/>
    <property type="match status" value="1"/>
</dbReference>
<dbReference type="FunFam" id="3.30.230.10:FF:000009">
    <property type="entry name" value="116 kDa U5 small nuclear ribonucleoprotein component"/>
    <property type="match status" value="1"/>
</dbReference>
<dbReference type="FunFam" id="2.40.30.10:FF:000110">
    <property type="entry name" value="Elongation factor 2"/>
    <property type="match status" value="1"/>
</dbReference>
<dbReference type="FunFam" id="3.30.70.240:FF:000010">
    <property type="entry name" value="Elongation factor 2"/>
    <property type="match status" value="1"/>
</dbReference>
<dbReference type="FunFam" id="3.40.50.300:FF:000684">
    <property type="entry name" value="Elongation factor 2"/>
    <property type="match status" value="1"/>
</dbReference>
<dbReference type="FunFam" id="3.30.70.870:FF:000002">
    <property type="entry name" value="Translation elongation factor 2"/>
    <property type="match status" value="1"/>
</dbReference>
<dbReference type="Gene3D" id="3.30.230.10">
    <property type="match status" value="1"/>
</dbReference>
<dbReference type="Gene3D" id="3.30.70.240">
    <property type="match status" value="1"/>
</dbReference>
<dbReference type="Gene3D" id="3.30.70.870">
    <property type="entry name" value="Elongation Factor G (Translational Gtpase), domain 3"/>
    <property type="match status" value="1"/>
</dbReference>
<dbReference type="Gene3D" id="3.40.50.300">
    <property type="entry name" value="P-loop containing nucleotide triphosphate hydrolases"/>
    <property type="match status" value="1"/>
</dbReference>
<dbReference type="Gene3D" id="2.40.30.10">
    <property type="entry name" value="Translation factors"/>
    <property type="match status" value="1"/>
</dbReference>
<dbReference type="HAMAP" id="MF_00054_A">
    <property type="entry name" value="EF_G_EF_2_A"/>
    <property type="match status" value="1"/>
</dbReference>
<dbReference type="InterPro" id="IPR041095">
    <property type="entry name" value="EFG_II"/>
</dbReference>
<dbReference type="InterPro" id="IPR035647">
    <property type="entry name" value="EFG_III/V"/>
</dbReference>
<dbReference type="InterPro" id="IPR000640">
    <property type="entry name" value="EFG_V-like"/>
</dbReference>
<dbReference type="InterPro" id="IPR004161">
    <property type="entry name" value="EFTu-like_2"/>
</dbReference>
<dbReference type="InterPro" id="IPR031157">
    <property type="entry name" value="G_TR_CS"/>
</dbReference>
<dbReference type="InterPro" id="IPR027417">
    <property type="entry name" value="P-loop_NTPase"/>
</dbReference>
<dbReference type="InterPro" id="IPR020568">
    <property type="entry name" value="Ribosomal_Su5_D2-typ_SF"/>
</dbReference>
<dbReference type="InterPro" id="IPR014721">
    <property type="entry name" value="Ribsml_uS5_D2-typ_fold_subgr"/>
</dbReference>
<dbReference type="InterPro" id="IPR005225">
    <property type="entry name" value="Small_GTP-bd"/>
</dbReference>
<dbReference type="InterPro" id="IPR000795">
    <property type="entry name" value="T_Tr_GTP-bd_dom"/>
</dbReference>
<dbReference type="InterPro" id="IPR009000">
    <property type="entry name" value="Transl_B-barrel_sf"/>
</dbReference>
<dbReference type="InterPro" id="IPR004543">
    <property type="entry name" value="Transl_elong_EFG/EF2_arc"/>
</dbReference>
<dbReference type="InterPro" id="IPR005517">
    <property type="entry name" value="Transl_elong_EFG/EF2_IV"/>
</dbReference>
<dbReference type="NCBIfam" id="TIGR00490">
    <property type="entry name" value="aEF-2"/>
    <property type="match status" value="1"/>
</dbReference>
<dbReference type="NCBIfam" id="TIGR00231">
    <property type="entry name" value="small_GTP"/>
    <property type="match status" value="1"/>
</dbReference>
<dbReference type="PANTHER" id="PTHR42908:SF3">
    <property type="entry name" value="ELONGATION FACTOR-LIKE GTPASE 1"/>
    <property type="match status" value="1"/>
</dbReference>
<dbReference type="PANTHER" id="PTHR42908">
    <property type="entry name" value="TRANSLATION ELONGATION FACTOR-RELATED"/>
    <property type="match status" value="1"/>
</dbReference>
<dbReference type="Pfam" id="PF00679">
    <property type="entry name" value="EFG_C"/>
    <property type="match status" value="1"/>
</dbReference>
<dbReference type="Pfam" id="PF14492">
    <property type="entry name" value="EFG_III"/>
    <property type="match status" value="1"/>
</dbReference>
<dbReference type="Pfam" id="PF03764">
    <property type="entry name" value="EFG_IV"/>
    <property type="match status" value="1"/>
</dbReference>
<dbReference type="Pfam" id="PF00009">
    <property type="entry name" value="GTP_EFTU"/>
    <property type="match status" value="1"/>
</dbReference>
<dbReference type="Pfam" id="PF03144">
    <property type="entry name" value="GTP_EFTU_D2"/>
    <property type="match status" value="1"/>
</dbReference>
<dbReference type="PRINTS" id="PR00315">
    <property type="entry name" value="ELONGATNFCT"/>
</dbReference>
<dbReference type="SMART" id="SM00838">
    <property type="entry name" value="EFG_C"/>
    <property type="match status" value="1"/>
</dbReference>
<dbReference type="SMART" id="SM00889">
    <property type="entry name" value="EFG_IV"/>
    <property type="match status" value="1"/>
</dbReference>
<dbReference type="SUPFAM" id="SSF54980">
    <property type="entry name" value="EF-G C-terminal domain-like"/>
    <property type="match status" value="2"/>
</dbReference>
<dbReference type="SUPFAM" id="SSF52540">
    <property type="entry name" value="P-loop containing nucleoside triphosphate hydrolases"/>
    <property type="match status" value="1"/>
</dbReference>
<dbReference type="SUPFAM" id="SSF54211">
    <property type="entry name" value="Ribosomal protein S5 domain 2-like"/>
    <property type="match status" value="1"/>
</dbReference>
<dbReference type="SUPFAM" id="SSF50447">
    <property type="entry name" value="Translation proteins"/>
    <property type="match status" value="1"/>
</dbReference>
<dbReference type="PROSITE" id="PS00301">
    <property type="entry name" value="G_TR_1"/>
    <property type="match status" value="1"/>
</dbReference>
<dbReference type="PROSITE" id="PS51722">
    <property type="entry name" value="G_TR_2"/>
    <property type="match status" value="1"/>
</dbReference>
<gene>
    <name type="primary">fusA</name>
    <name type="synonym">fus</name>
    <name type="ordered locus">PH1899</name>
    <name type="ORF">PHBB002</name>
</gene>
<evidence type="ECO:0000250" key="1"/>
<evidence type="ECO:0000269" key="2">
    <source>
    </source>
</evidence>
<evidence type="ECO:0000305" key="3"/>
<evidence type="ECO:0007829" key="4">
    <source>
        <dbReference type="PDB" id="5H7J"/>
    </source>
</evidence>
<evidence type="ECO:0007829" key="5">
    <source>
        <dbReference type="PDB" id="5H7K"/>
    </source>
</evidence>
<evidence type="ECO:0007829" key="6">
    <source>
        <dbReference type="PDB" id="5H7L"/>
    </source>
</evidence>
<proteinExistence type="evidence at protein level"/>
<comment type="function">
    <text evidence="1">Catalyzes the GTP-dependent ribosomal translocation step during translation elongation. During this step, the ribosome changes from the pre-translocational (PRE) to the post-translocational (POST) state as the newly formed A-site-bound peptidyl-tRNA and P-site-bound deacylated tRNA move to the P and E sites, respectively. Catalyzes the coordinated movement of the two tRNA molecules, the mRNA and conformational changes in the ribosome (By similarity).</text>
</comment>
<comment type="subcellular location">
    <subcellularLocation>
        <location evidence="1">Cytoplasm</location>
    </subcellularLocation>
</comment>
<comment type="similarity">
    <text evidence="3">Belongs to the TRAFAC class translation factor GTPase superfamily. Classic translation factor GTPase family. EF-G/EF-2 subfamily.</text>
</comment>
<comment type="sequence caution" evidence="3">
    <conflict type="erroneous initiation">
        <sequence resource="EMBL-CDS" id="BAA31022"/>
    </conflict>
</comment>
<accession>O59521</accession>